<sequence length="367" mass="40115">MTTSPYTSQSAFDGSRMRVTLLVDPSRRRQQEFLDAYEQMRDRVASVPDLGDQLCQSLENPSQWLITSEWAAPPYLAWVNSEDHLETVKPLQSCVRDLRSMRYGIVRETGGTGPHLGGLQTAVRVGDGVTRHALTFTVKPGSESKVAEVLAGYAPPQADVDDSTRLRRTTLFMHGNRVVRTVEVEGDLMAALRHVARQPEVRAVEEAMNPHLEQHRDLTDPESARAFFARAAMPAVHHVARGGPEPAGLRRHALYYPARPGCGMALARLLSRQDETAAADPAGPVTAATVFQREEIVVRLIDVPGDPETDPVMALGIHGKRKAAVLARLLDGAALGLAGPPTSEREATRLLTHADMTLITDRRAAQP</sequence>
<comment type="pathway">
    <text>Antibiotic biosynthesis; curamycin biosynthesis.</text>
</comment>
<comment type="similarity">
    <text evidence="1">Belongs to the SchA/CurD family.</text>
</comment>
<feature type="chain" id="PRO_0000079563" description="Polyketide synthase CurD">
    <location>
        <begin position="1"/>
        <end position="367"/>
    </location>
</feature>
<feature type="domain" description="ABM">
    <location>
        <begin position="15"/>
        <end position="106"/>
    </location>
</feature>
<accession>Q02587</accession>
<organism>
    <name type="scientific">Streptomyces cyaneus</name>
    <name type="common">Streptomyces curacoi</name>
    <dbReference type="NCBI Taxonomy" id="1904"/>
    <lineage>
        <taxon>Bacteria</taxon>
        <taxon>Bacillati</taxon>
        <taxon>Actinomycetota</taxon>
        <taxon>Actinomycetes</taxon>
        <taxon>Kitasatosporales</taxon>
        <taxon>Streptomycetaceae</taxon>
        <taxon>Streptomyces</taxon>
    </lineage>
</organism>
<evidence type="ECO:0000305" key="1"/>
<keyword id="KW-0045">Antibiotic biosynthesis</keyword>
<name>CURD_STRCN</name>
<dbReference type="EMBL" id="X62518">
    <property type="protein sequence ID" value="CAA44378.1"/>
    <property type="molecule type" value="Genomic_DNA"/>
</dbReference>
<dbReference type="PIR" id="JC1213">
    <property type="entry name" value="JC1213"/>
</dbReference>
<dbReference type="SMR" id="Q02587"/>
<dbReference type="UniPathway" id="UPA00176"/>
<dbReference type="GO" id="GO:0017000">
    <property type="term" value="P:antibiotic biosynthetic process"/>
    <property type="evidence" value="ECO:0007669"/>
    <property type="project" value="UniProtKB-KW"/>
</dbReference>
<dbReference type="InterPro" id="IPR007138">
    <property type="entry name" value="ABM_dom"/>
</dbReference>
<dbReference type="InterPro" id="IPR011008">
    <property type="entry name" value="Dimeric_a/b-barrel"/>
</dbReference>
<dbReference type="InterPro" id="IPR007575">
    <property type="entry name" value="SchA_CurD-like"/>
</dbReference>
<dbReference type="Pfam" id="PF03992">
    <property type="entry name" value="ABM"/>
    <property type="match status" value="1"/>
</dbReference>
<dbReference type="Pfam" id="PF04486">
    <property type="entry name" value="SchA_CurD"/>
    <property type="match status" value="1"/>
</dbReference>
<dbReference type="SUPFAM" id="SSF54909">
    <property type="entry name" value="Dimeric alpha+beta barrel"/>
    <property type="match status" value="1"/>
</dbReference>
<dbReference type="PROSITE" id="PS51725">
    <property type="entry name" value="ABM"/>
    <property type="match status" value="1"/>
</dbReference>
<proteinExistence type="inferred from homology"/>
<protein>
    <recommendedName>
        <fullName>Polyketide synthase CurD</fullName>
    </recommendedName>
</protein>
<gene>
    <name type="primary">curD</name>
</gene>
<reference key="1">
    <citation type="journal article" date="1992" name="Gene">
        <title>Analysis of a polyketide synthesis-encoding gene cluster of Streptomyces curacoi.</title>
        <authorList>
            <person name="Bergh S."/>
            <person name="Uhlen M."/>
        </authorList>
    </citation>
    <scope>NUCLEOTIDE SEQUENCE [GENOMIC DNA]</scope>
    <source>
        <strain>ATCC 13385 / CBS 484.68 / DSM 40107 / JCM 4219 / NBRC 12761 / NRRL B-2901 / VKM Ac-621</strain>
    </source>
</reference>